<dbReference type="EC" id="7.1.1.-" evidence="1"/>
<dbReference type="EMBL" id="AM406670">
    <property type="protein sequence ID" value="CAL94026.1"/>
    <property type="molecule type" value="Genomic_DNA"/>
</dbReference>
<dbReference type="RefSeq" id="WP_011765142.1">
    <property type="nucleotide sequence ID" value="NC_008702.1"/>
</dbReference>
<dbReference type="SMR" id="A1K5C1"/>
<dbReference type="STRING" id="62928.azo1409"/>
<dbReference type="KEGG" id="azo:azo1409"/>
<dbReference type="eggNOG" id="COG1007">
    <property type="taxonomic scope" value="Bacteria"/>
</dbReference>
<dbReference type="HOGENOM" id="CLU_007100_1_3_4"/>
<dbReference type="Proteomes" id="UP000002588">
    <property type="component" value="Chromosome"/>
</dbReference>
<dbReference type="GO" id="GO:0005886">
    <property type="term" value="C:plasma membrane"/>
    <property type="evidence" value="ECO:0007669"/>
    <property type="project" value="UniProtKB-SubCell"/>
</dbReference>
<dbReference type="GO" id="GO:0008137">
    <property type="term" value="F:NADH dehydrogenase (ubiquinone) activity"/>
    <property type="evidence" value="ECO:0007669"/>
    <property type="project" value="InterPro"/>
</dbReference>
<dbReference type="GO" id="GO:0050136">
    <property type="term" value="F:NADH:ubiquinone reductase (non-electrogenic) activity"/>
    <property type="evidence" value="ECO:0007669"/>
    <property type="project" value="UniProtKB-UniRule"/>
</dbReference>
<dbReference type="GO" id="GO:0048038">
    <property type="term" value="F:quinone binding"/>
    <property type="evidence" value="ECO:0007669"/>
    <property type="project" value="UniProtKB-KW"/>
</dbReference>
<dbReference type="GO" id="GO:0042773">
    <property type="term" value="P:ATP synthesis coupled electron transport"/>
    <property type="evidence" value="ECO:0007669"/>
    <property type="project" value="InterPro"/>
</dbReference>
<dbReference type="Gene3D" id="1.10.287.3510">
    <property type="match status" value="1"/>
</dbReference>
<dbReference type="HAMAP" id="MF_00445">
    <property type="entry name" value="NDH1_NuoN_1"/>
    <property type="match status" value="1"/>
</dbReference>
<dbReference type="InterPro" id="IPR010096">
    <property type="entry name" value="NADH-Q_OxRdtase_suN/2"/>
</dbReference>
<dbReference type="InterPro" id="IPR001750">
    <property type="entry name" value="ND/Mrp_TM"/>
</dbReference>
<dbReference type="NCBIfam" id="TIGR01770">
    <property type="entry name" value="NDH_I_N"/>
    <property type="match status" value="1"/>
</dbReference>
<dbReference type="NCBIfam" id="NF004442">
    <property type="entry name" value="PRK05777.1-5"/>
    <property type="match status" value="1"/>
</dbReference>
<dbReference type="PANTHER" id="PTHR22773">
    <property type="entry name" value="NADH DEHYDROGENASE"/>
    <property type="match status" value="1"/>
</dbReference>
<dbReference type="Pfam" id="PF00361">
    <property type="entry name" value="Proton_antipo_M"/>
    <property type="match status" value="1"/>
</dbReference>
<dbReference type="PRINTS" id="PR01434">
    <property type="entry name" value="NADHDHGNASE5"/>
</dbReference>
<organism>
    <name type="scientific">Azoarcus sp. (strain BH72)</name>
    <dbReference type="NCBI Taxonomy" id="418699"/>
    <lineage>
        <taxon>Bacteria</taxon>
        <taxon>Pseudomonadati</taxon>
        <taxon>Pseudomonadota</taxon>
        <taxon>Betaproteobacteria</taxon>
        <taxon>Rhodocyclales</taxon>
        <taxon>Zoogloeaceae</taxon>
        <taxon>Azoarcus</taxon>
    </lineage>
</organism>
<feature type="chain" id="PRO_0000391101" description="NADH-quinone oxidoreductase subunit N">
    <location>
        <begin position="1"/>
        <end position="491"/>
    </location>
</feature>
<feature type="transmembrane region" description="Helical" evidence="1">
    <location>
        <begin position="11"/>
        <end position="31"/>
    </location>
</feature>
<feature type="transmembrane region" description="Helical" evidence="1">
    <location>
        <begin position="38"/>
        <end position="58"/>
    </location>
</feature>
<feature type="transmembrane region" description="Helical" evidence="1">
    <location>
        <begin position="74"/>
        <end position="94"/>
    </location>
</feature>
<feature type="transmembrane region" description="Helical" evidence="1">
    <location>
        <begin position="106"/>
        <end position="126"/>
    </location>
</feature>
<feature type="transmembrane region" description="Helical" evidence="1">
    <location>
        <begin position="128"/>
        <end position="148"/>
    </location>
</feature>
<feature type="transmembrane region" description="Helical" evidence="1">
    <location>
        <begin position="163"/>
        <end position="183"/>
    </location>
</feature>
<feature type="transmembrane region" description="Helical" evidence="1">
    <location>
        <begin position="206"/>
        <end position="226"/>
    </location>
</feature>
<feature type="transmembrane region" description="Helical" evidence="1">
    <location>
        <begin position="243"/>
        <end position="263"/>
    </location>
</feature>
<feature type="transmembrane region" description="Helical" evidence="1">
    <location>
        <begin position="272"/>
        <end position="292"/>
    </location>
</feature>
<feature type="transmembrane region" description="Helical" evidence="1">
    <location>
        <begin position="301"/>
        <end position="321"/>
    </location>
</feature>
<feature type="transmembrane region" description="Helical" evidence="1">
    <location>
        <begin position="336"/>
        <end position="356"/>
    </location>
</feature>
<feature type="transmembrane region" description="Helical" evidence="1">
    <location>
        <begin position="379"/>
        <end position="399"/>
    </location>
</feature>
<feature type="transmembrane region" description="Helical" evidence="1">
    <location>
        <begin position="410"/>
        <end position="430"/>
    </location>
</feature>
<feature type="transmembrane region" description="Helical" evidence="1">
    <location>
        <begin position="465"/>
        <end position="485"/>
    </location>
</feature>
<reference key="1">
    <citation type="journal article" date="2006" name="Nat. Biotechnol.">
        <title>Complete genome of the mutualistic, N2-fixing grass endophyte Azoarcus sp. strain BH72.</title>
        <authorList>
            <person name="Krause A."/>
            <person name="Ramakumar A."/>
            <person name="Bartels D."/>
            <person name="Battistoni F."/>
            <person name="Bekel T."/>
            <person name="Boch J."/>
            <person name="Boehm M."/>
            <person name="Friedrich F."/>
            <person name="Hurek T."/>
            <person name="Krause L."/>
            <person name="Linke B."/>
            <person name="McHardy A.C."/>
            <person name="Sarkar A."/>
            <person name="Schneiker S."/>
            <person name="Syed A.A."/>
            <person name="Thauer R."/>
            <person name="Vorhoelter F.-J."/>
            <person name="Weidner S."/>
            <person name="Puehler A."/>
            <person name="Reinhold-Hurek B."/>
            <person name="Kaiser O."/>
            <person name="Goesmann A."/>
        </authorList>
    </citation>
    <scope>NUCLEOTIDE SEQUENCE [LARGE SCALE GENOMIC DNA]</scope>
    <source>
        <strain>BH72</strain>
    </source>
</reference>
<protein>
    <recommendedName>
        <fullName evidence="1">NADH-quinone oxidoreductase subunit N</fullName>
        <ecNumber evidence="1">7.1.1.-</ecNumber>
    </recommendedName>
    <alternativeName>
        <fullName evidence="1">NADH dehydrogenase I subunit N</fullName>
    </alternativeName>
    <alternativeName>
        <fullName evidence="1">NDH-1 subunit N</fullName>
    </alternativeName>
</protein>
<sequence>MNFVVPDFYPATAEIFVAVMALVIMLATTFARSVARGLAYGLTLVTLIGAAIITYNTANPRAVTTFSNMFIGDLLGDVLKLLIYFSMAVALLYGRSYLADRKLDKPEYYVLALLMTLGMMVMVTSNHLLSMYIGLELMSLSLYALVAFDRDSARGTEAAMKYFVLGALASGLLLYGMSMLYGATGTLEISGIAKSVYNQAANDTVLLFGLVFLMAGICFKLGVVPFHMWIPDVYHGANTAVTLIIATAPKLAAFAMAVRLLVWGLFDVAEHWQTMLMFVAVLSIVLGNLAAIAQTNLKRMLAYSGISHMGFMLLGLLSGVVDGDPHYALDAYSAAMFYAISYVIMSLASFGMIILLSRAGFEAENIDDFKGLNKRSPWFAAMMMFVMFSMAGIPFFIGFFAKLAVLQAVVAAGYIWVAVVAVLMSVIGAFYYLRLVKVMYFDEPADATPIQAPAELRVFLSANGLAIAAIGLAPQGVMTLCTFVLLASTQP</sequence>
<keyword id="KW-0997">Cell inner membrane</keyword>
<keyword id="KW-1003">Cell membrane</keyword>
<keyword id="KW-0472">Membrane</keyword>
<keyword id="KW-0520">NAD</keyword>
<keyword id="KW-0874">Quinone</keyword>
<keyword id="KW-1185">Reference proteome</keyword>
<keyword id="KW-1278">Translocase</keyword>
<keyword id="KW-0812">Transmembrane</keyword>
<keyword id="KW-1133">Transmembrane helix</keyword>
<keyword id="KW-0813">Transport</keyword>
<keyword id="KW-0830">Ubiquinone</keyword>
<proteinExistence type="inferred from homology"/>
<accession>A1K5C1</accession>
<evidence type="ECO:0000255" key="1">
    <source>
        <dbReference type="HAMAP-Rule" id="MF_00445"/>
    </source>
</evidence>
<gene>
    <name evidence="1" type="primary">nuoN</name>
    <name type="ordered locus">azo1409</name>
</gene>
<name>NUON_AZOSB</name>
<comment type="function">
    <text evidence="1">NDH-1 shuttles electrons from NADH, via FMN and iron-sulfur (Fe-S) centers, to quinones in the respiratory chain. The immediate electron acceptor for the enzyme in this species is believed to be ubiquinone. Couples the redox reaction to proton translocation (for every two electrons transferred, four hydrogen ions are translocated across the cytoplasmic membrane), and thus conserves the redox energy in a proton gradient.</text>
</comment>
<comment type="catalytic activity">
    <reaction evidence="1">
        <text>a quinone + NADH + 5 H(+)(in) = a quinol + NAD(+) + 4 H(+)(out)</text>
        <dbReference type="Rhea" id="RHEA:57888"/>
        <dbReference type="ChEBI" id="CHEBI:15378"/>
        <dbReference type="ChEBI" id="CHEBI:24646"/>
        <dbReference type="ChEBI" id="CHEBI:57540"/>
        <dbReference type="ChEBI" id="CHEBI:57945"/>
        <dbReference type="ChEBI" id="CHEBI:132124"/>
    </reaction>
</comment>
<comment type="subunit">
    <text evidence="1">NDH-1 is composed of 14 different subunits. Subunits NuoA, H, J, K, L, M, N constitute the membrane sector of the complex.</text>
</comment>
<comment type="subcellular location">
    <subcellularLocation>
        <location evidence="1">Cell inner membrane</location>
        <topology evidence="1">Multi-pass membrane protein</topology>
    </subcellularLocation>
</comment>
<comment type="similarity">
    <text evidence="1">Belongs to the complex I subunit 2 family.</text>
</comment>